<proteinExistence type="evidence at protein level"/>
<dbReference type="EMBL" id="DQ185512">
    <property type="protein sequence ID" value="ABA28304.1"/>
    <property type="molecule type" value="mRNA"/>
</dbReference>
<dbReference type="EMBL" id="Z75711">
    <property type="protein sequence ID" value="CAK55175.1"/>
    <property type="molecule type" value="Genomic_DNA"/>
</dbReference>
<dbReference type="EMBL" id="Z75711">
    <property type="protein sequence ID" value="CAK55176.1"/>
    <property type="molecule type" value="Genomic_DNA"/>
</dbReference>
<dbReference type="RefSeq" id="NP_001040671.1">
    <molecule id="Q3LRZ3-2"/>
    <property type="nucleotide sequence ID" value="NM_001047206.5"/>
</dbReference>
<dbReference type="RefSeq" id="NP_001040672.1">
    <molecule id="Q3LRZ3-1"/>
    <property type="nucleotide sequence ID" value="NM_001047207.6"/>
</dbReference>
<dbReference type="SMR" id="Q3LRZ3"/>
<dbReference type="BioGRID" id="51582">
    <property type="interactions" value="9"/>
</dbReference>
<dbReference type="FunCoup" id="Q3LRZ3">
    <property type="interactions" value="777"/>
</dbReference>
<dbReference type="IntAct" id="Q3LRZ3">
    <property type="interactions" value="10"/>
</dbReference>
<dbReference type="STRING" id="6239.K02B12.4b.1"/>
<dbReference type="PaxDb" id="6239-K02B12.4b"/>
<dbReference type="EnsemblMetazoa" id="K02B12.4a.1">
    <molecule id="Q3LRZ3-2"/>
    <property type="protein sequence ID" value="K02B12.4a.1"/>
    <property type="gene ID" value="WBGene00010497"/>
</dbReference>
<dbReference type="EnsemblMetazoa" id="K02B12.4b.1">
    <molecule id="Q3LRZ3-1"/>
    <property type="protein sequence ID" value="K02B12.4b.1"/>
    <property type="gene ID" value="WBGene00010497"/>
</dbReference>
<dbReference type="GeneID" id="186869"/>
<dbReference type="KEGG" id="cel:CELE_K02B12.4"/>
<dbReference type="UCSC" id="K02B12.4b">
    <property type="organism name" value="c. elegans"/>
</dbReference>
<dbReference type="AGR" id="WB:WBGene00010497"/>
<dbReference type="CTD" id="186869"/>
<dbReference type="WormBase" id="K02B12.4a">
    <molecule id="Q3LRZ3-2"/>
    <property type="protein sequence ID" value="CE40260"/>
    <property type="gene ID" value="WBGene00010497"/>
    <property type="gene designation" value="axl-1"/>
</dbReference>
<dbReference type="WormBase" id="K02B12.4b">
    <molecule id="Q3LRZ3-1"/>
    <property type="protein sequence ID" value="CE40261"/>
    <property type="gene ID" value="WBGene00010497"/>
    <property type="gene designation" value="axl-1"/>
</dbReference>
<dbReference type="eggNOG" id="ENOG502TG1M">
    <property type="taxonomic scope" value="Eukaryota"/>
</dbReference>
<dbReference type="HOGENOM" id="CLU_058688_0_0_1"/>
<dbReference type="InParanoid" id="Q3LRZ3"/>
<dbReference type="OrthoDB" id="10007451at2759"/>
<dbReference type="SignaLink" id="Q3LRZ3"/>
<dbReference type="PRO" id="PR:Q3LRZ3"/>
<dbReference type="Proteomes" id="UP000001940">
    <property type="component" value="Chromosome I"/>
</dbReference>
<dbReference type="Bgee" id="WBGene00010497">
    <property type="expression patterns" value="Expressed in larva and 4 other cell types or tissues"/>
</dbReference>
<dbReference type="GO" id="GO:0019901">
    <property type="term" value="F:protein kinase binding"/>
    <property type="evidence" value="ECO:0000353"/>
    <property type="project" value="UniProtKB"/>
</dbReference>
<dbReference type="GO" id="GO:0007411">
    <property type="term" value="P:axon guidance"/>
    <property type="evidence" value="ECO:0000315"/>
    <property type="project" value="UniProtKB"/>
</dbReference>
<dbReference type="GO" id="GO:0048468">
    <property type="term" value="P:cell development"/>
    <property type="evidence" value="ECO:0000315"/>
    <property type="project" value="UniProtKB"/>
</dbReference>
<dbReference type="GO" id="GO:0030178">
    <property type="term" value="P:negative regulation of Wnt signaling pathway"/>
    <property type="evidence" value="ECO:0000315"/>
    <property type="project" value="UniProtKB"/>
</dbReference>
<dbReference type="GO" id="GO:0016055">
    <property type="term" value="P:Wnt signaling pathway"/>
    <property type="evidence" value="ECO:0007669"/>
    <property type="project" value="UniProtKB-KW"/>
</dbReference>
<dbReference type="Gene3D" id="2.40.240.130">
    <property type="match status" value="1"/>
</dbReference>
<dbReference type="InterPro" id="IPR001158">
    <property type="entry name" value="DIX"/>
</dbReference>
<dbReference type="InterPro" id="IPR038207">
    <property type="entry name" value="DIX_dom_sf"/>
</dbReference>
<dbReference type="InterPro" id="IPR016137">
    <property type="entry name" value="RGS"/>
</dbReference>
<dbReference type="InterPro" id="IPR036305">
    <property type="entry name" value="RGS_sf"/>
</dbReference>
<dbReference type="InterPro" id="IPR029071">
    <property type="entry name" value="Ubiquitin-like_domsf"/>
</dbReference>
<dbReference type="Pfam" id="PF00778">
    <property type="entry name" value="DIX"/>
    <property type="match status" value="1"/>
</dbReference>
<dbReference type="SUPFAM" id="SSF48097">
    <property type="entry name" value="Regulator of G-protein signaling, RGS"/>
    <property type="match status" value="1"/>
</dbReference>
<dbReference type="SUPFAM" id="SSF54236">
    <property type="entry name" value="Ubiquitin-like"/>
    <property type="match status" value="1"/>
</dbReference>
<dbReference type="PROSITE" id="PS50841">
    <property type="entry name" value="DIX"/>
    <property type="match status" value="1"/>
</dbReference>
<dbReference type="PROSITE" id="PS50132">
    <property type="entry name" value="RGS"/>
    <property type="match status" value="1"/>
</dbReference>
<organism>
    <name type="scientific">Caenorhabditis elegans</name>
    <dbReference type="NCBI Taxonomy" id="6239"/>
    <lineage>
        <taxon>Eukaryota</taxon>
        <taxon>Metazoa</taxon>
        <taxon>Ecdysozoa</taxon>
        <taxon>Nematoda</taxon>
        <taxon>Chromadorea</taxon>
        <taxon>Rhabditida</taxon>
        <taxon>Rhabditina</taxon>
        <taxon>Rhabditomorpha</taxon>
        <taxon>Rhabditoidea</taxon>
        <taxon>Rhabditidae</taxon>
        <taxon>Peloderinae</taxon>
        <taxon>Caenorhabditis</taxon>
    </lineage>
</organism>
<protein>
    <recommendedName>
        <fullName evidence="6">Axin-like protein 1</fullName>
    </recommendedName>
</protein>
<accession>Q3LRZ3</accession>
<accession>Q14V27</accession>
<sequence>MTMRSKFSIDRVLHDTAFAKWCQKEESRNADSITLYTSILDFESKLKTGSPSLSLLKLARHIHRKYVSLNTGTCHVIGDSIRTKISTRVHEVLDGKPPYIDLFDPLKQPLFQHLRSMHTEFSTTTADVNTTWEDASSTSSSNKGATIWFNEDAIDKSSRHEIGQSTVTHESEDDRFSFFNAVCTRLNSLQETKNSSETEEHAESPRKEKSSTPYGTDGFAPPPRSTQTNTLKVSNLPKRFESLYKKKRQQVATSDSSGFGSNASDFWSFERYGKSNQGTLERPNRLFTGTNNGFSTLQPKRRGSEAPKMTVELRYENDVPMVAKISANHAQSVTLRYFRHLFGLHYTDNCRFFFKSTCEDGSAQYQWTLLFHDDDILPVFQNRITAICRMCPPPEDHDLI</sequence>
<evidence type="ECO:0000255" key="1">
    <source>
        <dbReference type="PROSITE-ProRule" id="PRU00069"/>
    </source>
</evidence>
<evidence type="ECO:0000255" key="2">
    <source>
        <dbReference type="PROSITE-ProRule" id="PRU00171"/>
    </source>
</evidence>
<evidence type="ECO:0000256" key="3">
    <source>
        <dbReference type="SAM" id="MobiDB-lite"/>
    </source>
</evidence>
<evidence type="ECO:0000269" key="4">
    <source>
    </source>
</evidence>
<evidence type="ECO:0000269" key="5">
    <source>
    </source>
</evidence>
<evidence type="ECO:0000303" key="6">
    <source>
    </source>
</evidence>
<evidence type="ECO:0000303" key="7">
    <source>
    </source>
</evidence>
<evidence type="ECO:0000305" key="8"/>
<evidence type="ECO:0000312" key="9">
    <source>
        <dbReference type="EMBL" id="ABA28304.1"/>
    </source>
</evidence>
<evidence type="ECO:0000312" key="10">
    <source>
        <dbReference type="EMBL" id="CAK55175.1"/>
    </source>
</evidence>
<gene>
    <name evidence="9" type="primary">axl-1</name>
    <name type="ORF">K02B12.4</name>
</gene>
<name>AXLP1_CAEEL</name>
<reference evidence="8 9" key="1">
    <citation type="journal article" date="2007" name="Dev. Biol.">
        <title>Two functionally distinct axin-like proteins regulate canonical Wnt signaling in C. elegans.</title>
        <authorList>
            <person name="Oosterveen T."/>
            <person name="Coudreuse D.Y.M."/>
            <person name="Yang P.-T."/>
            <person name="Fraser E."/>
            <person name="Bergsma J."/>
            <person name="Dale T.C."/>
            <person name="Korswagen H.C."/>
        </authorList>
    </citation>
    <scope>NUCLEOTIDE SEQUENCE [MRNA] (ISOFORM B)</scope>
    <scope>FUNCTION</scope>
    <scope>INTERACTION WITH BAR-1; DSH-2; GSK-3 AND MIG-5</scope>
    <scope>DISRUPTION PHENOTYPE</scope>
</reference>
<reference evidence="10" key="2">
    <citation type="journal article" date="1998" name="Science">
        <title>Genome sequence of the nematode C. elegans: a platform for investigating biology.</title>
        <authorList>
            <consortium name="The C. elegans sequencing consortium"/>
        </authorList>
    </citation>
    <scope>NUCLEOTIDE SEQUENCE [LARGE SCALE GENOMIC DNA]</scope>
    <scope>ALTERNATIVE SPLICING</scope>
    <source>
        <strain>Bristol N2</strain>
    </source>
</reference>
<comment type="function">
    <text evidence="4">Works in parallel with pry-1 in negatively regulating bar-1 signaling in vulval precursor cells and Q neuroblasts. Shown to have a role in excretory cell development.</text>
</comment>
<comment type="subunit">
    <text evidence="4">Interacts with bar-1, dsh-2, gsk-3, and mig-5.</text>
</comment>
<comment type="interaction">
    <interactant intactId="EBI-327368">
        <id>Q3LRZ3</id>
    </interactant>
    <interactant intactId="EBI-330089">
        <id>Q9U2Q9</id>
        <label>gsk-3</label>
    </interactant>
    <organismsDiffer>false</organismsDiffer>
    <experiments>4</experiments>
</comment>
<comment type="alternative products">
    <event type="alternative splicing"/>
    <isoform>
        <id>Q3LRZ3-1</id>
        <name evidence="4">b</name>
        <sequence type="displayed"/>
    </isoform>
    <isoform>
        <id>Q3LRZ3-2</id>
        <name evidence="5">a</name>
        <sequence type="described" ref="VSP_052860 VSP_052861"/>
    </isoform>
</comment>
<comment type="disruption phenotype">
    <text evidence="4">Worms exhibit defects in excretory cell development and axonal migration.</text>
</comment>
<comment type="miscellaneous">
    <text>Reporter transgenes fail to show detectable expression indicating that axl-1 may be expressed at low levels.</text>
</comment>
<keyword id="KW-0025">Alternative splicing</keyword>
<keyword id="KW-0217">Developmental protein</keyword>
<keyword id="KW-1185">Reference proteome</keyword>
<keyword id="KW-0879">Wnt signaling pathway</keyword>
<feature type="chain" id="PRO_0000347252" description="Axin-like protein 1">
    <location>
        <begin position="1"/>
        <end position="400"/>
    </location>
</feature>
<feature type="domain" description="RGS" evidence="2">
    <location>
        <begin position="4"/>
        <end position="132"/>
    </location>
</feature>
<feature type="domain" description="DIX" evidence="1">
    <location>
        <begin position="305"/>
        <end position="392"/>
    </location>
</feature>
<feature type="region of interest" description="Disordered" evidence="3">
    <location>
        <begin position="190"/>
        <end position="233"/>
    </location>
</feature>
<feature type="region of interest" description="Disordered" evidence="3">
    <location>
        <begin position="278"/>
        <end position="306"/>
    </location>
</feature>
<feature type="compositionally biased region" description="Basic and acidic residues" evidence="3">
    <location>
        <begin position="194"/>
        <end position="210"/>
    </location>
</feature>
<feature type="compositionally biased region" description="Polar residues" evidence="3">
    <location>
        <begin position="287"/>
        <end position="298"/>
    </location>
</feature>
<feature type="splice variant" id="VSP_052860" description="In isoform a." evidence="7">
    <location>
        <begin position="1"/>
        <end position="69"/>
    </location>
</feature>
<feature type="splice variant" id="VSP_052861" description="In isoform a." evidence="7">
    <original>NTGTCHVIGDSIRTKISTRVHE</original>
    <variation>MATMSRRWNYFTPHYNDEGSID</variation>
    <location>
        <begin position="70"/>
        <end position="91"/>
    </location>
</feature>